<reference key="1">
    <citation type="submission" date="2004-06" db="EMBL/GenBank/DDBJ databases">
        <authorList>
            <person name="Birren B.W."/>
            <person name="Stange-Thomann N."/>
            <person name="Hafez N."/>
            <person name="DeCaprio D."/>
            <person name="Fisher S."/>
            <person name="Butler J."/>
            <person name="Elkins T."/>
            <person name="Kodira C.D."/>
            <person name="Major J."/>
            <person name="Wang S."/>
            <person name="Nicol R."/>
            <person name="Nusbaum C."/>
        </authorList>
    </citation>
    <scope>NUCLEOTIDE SEQUENCE [LARGE SCALE GENOMIC DNA]</scope>
    <source>
        <strain>ATCC 33453 / NBRC 100688 / NCTC 11704 / L1</strain>
    </source>
</reference>
<feature type="chain" id="PRO_0000140979" description="Thymidylate synthase">
    <location>
        <begin position="1"/>
        <end position="288"/>
    </location>
</feature>
<feature type="active site" description="Nucleophile" evidence="1">
    <location>
        <position position="170"/>
    </location>
</feature>
<feature type="binding site" description="in other chain" evidence="1">
    <location>
        <position position="21"/>
    </location>
    <ligand>
        <name>dUMP</name>
        <dbReference type="ChEBI" id="CHEBI:246422"/>
        <note>ligand shared between dimeric partners</note>
    </ligand>
</feature>
<feature type="binding site" evidence="1">
    <location>
        <begin position="150"/>
        <end position="151"/>
    </location>
    <ligand>
        <name>dUMP</name>
        <dbReference type="ChEBI" id="CHEBI:246422"/>
        <note>ligand shared between dimeric partners</note>
    </ligand>
</feature>
<feature type="binding site" description="in other chain" evidence="1">
    <location>
        <begin position="191"/>
        <end position="194"/>
    </location>
    <ligand>
        <name>dUMP</name>
        <dbReference type="ChEBI" id="CHEBI:246422"/>
        <note>ligand shared between dimeric partners</note>
    </ligand>
</feature>
<feature type="binding site" evidence="1">
    <location>
        <position position="194"/>
    </location>
    <ligand>
        <name>(6R)-5,10-methylene-5,6,7,8-tetrahydrofolate</name>
        <dbReference type="ChEBI" id="CHEBI:15636"/>
    </ligand>
</feature>
<feature type="binding site" description="in other chain" evidence="1">
    <location>
        <position position="202"/>
    </location>
    <ligand>
        <name>dUMP</name>
        <dbReference type="ChEBI" id="CHEBI:246422"/>
        <note>ligand shared between dimeric partners</note>
    </ligand>
</feature>
<feature type="binding site" description="in other chain" evidence="1">
    <location>
        <begin position="232"/>
        <end position="234"/>
    </location>
    <ligand>
        <name>dUMP</name>
        <dbReference type="ChEBI" id="CHEBI:246422"/>
        <note>ligand shared between dimeric partners</note>
    </ligand>
</feature>
<feature type="binding site" evidence="1">
    <location>
        <position position="287"/>
    </location>
    <ligand>
        <name>(6R)-5,10-methylene-5,6,7,8-tetrahydrofolate</name>
        <dbReference type="ChEBI" id="CHEBI:15636"/>
    </ligand>
</feature>
<keyword id="KW-0963">Cytoplasm</keyword>
<keyword id="KW-0489">Methyltransferase</keyword>
<keyword id="KW-0545">Nucleotide biosynthesis</keyword>
<keyword id="KW-1185">Reference proteome</keyword>
<keyword id="KW-0808">Transferase</keyword>
<proteinExistence type="inferred from homology"/>
<comment type="function">
    <text evidence="1">Catalyzes the reductive methylation of 2'-deoxyuridine-5'-monophosphate (dUMP) to 2'-deoxythymidine-5'-monophosphate (dTMP) while utilizing 5,10-methylenetetrahydrofolate (mTHF) as the methyl donor and reductant in the reaction, yielding dihydrofolate (DHF) as a by-product. This enzymatic reaction provides an intracellular de novo source of dTMP, an essential precursor for DNA biosynthesis.</text>
</comment>
<comment type="catalytic activity">
    <reaction evidence="1">
        <text>dUMP + (6R)-5,10-methylene-5,6,7,8-tetrahydrofolate = 7,8-dihydrofolate + dTMP</text>
        <dbReference type="Rhea" id="RHEA:12104"/>
        <dbReference type="ChEBI" id="CHEBI:15636"/>
        <dbReference type="ChEBI" id="CHEBI:57451"/>
        <dbReference type="ChEBI" id="CHEBI:63528"/>
        <dbReference type="ChEBI" id="CHEBI:246422"/>
        <dbReference type="EC" id="2.1.1.45"/>
    </reaction>
</comment>
<comment type="pathway">
    <text evidence="1">Pyrimidine metabolism; dTTP biosynthesis.</text>
</comment>
<comment type="subunit">
    <text evidence="1">Homodimer.</text>
</comment>
<comment type="subcellular location">
    <subcellularLocation>
        <location evidence="1">Cytoplasm</location>
    </subcellularLocation>
</comment>
<comment type="similarity">
    <text evidence="1">Belongs to the thymidylate synthase family. Bacterial-type ThyA subfamily.</text>
</comment>
<dbReference type="EC" id="2.1.1.45" evidence="1"/>
<dbReference type="EMBL" id="AE017263">
    <property type="protein sequence ID" value="AAT75778.1"/>
    <property type="molecule type" value="Genomic_DNA"/>
</dbReference>
<dbReference type="RefSeq" id="WP_011183318.1">
    <property type="nucleotide sequence ID" value="NC_006055.1"/>
</dbReference>
<dbReference type="RefSeq" id="YP_053662.1">
    <property type="nucleotide sequence ID" value="NC_006055.1"/>
</dbReference>
<dbReference type="SMR" id="Q6F145"/>
<dbReference type="STRING" id="265311.Mfl419"/>
<dbReference type="PaxDb" id="265311-Mfl419"/>
<dbReference type="EnsemblBacteria" id="AAT75778">
    <property type="protein sequence ID" value="AAT75778"/>
    <property type="gene ID" value="Mfl419"/>
</dbReference>
<dbReference type="GeneID" id="2897608"/>
<dbReference type="KEGG" id="mfl:Mfl419"/>
<dbReference type="PATRIC" id="fig|265311.5.peg.420"/>
<dbReference type="eggNOG" id="COG0207">
    <property type="taxonomic scope" value="Bacteria"/>
</dbReference>
<dbReference type="HOGENOM" id="CLU_021669_0_0_14"/>
<dbReference type="OrthoDB" id="9774633at2"/>
<dbReference type="UniPathway" id="UPA00575"/>
<dbReference type="Proteomes" id="UP000006647">
    <property type="component" value="Chromosome"/>
</dbReference>
<dbReference type="GO" id="GO:0005829">
    <property type="term" value="C:cytosol"/>
    <property type="evidence" value="ECO:0007669"/>
    <property type="project" value="TreeGrafter"/>
</dbReference>
<dbReference type="GO" id="GO:0004799">
    <property type="term" value="F:thymidylate synthase activity"/>
    <property type="evidence" value="ECO:0007669"/>
    <property type="project" value="UniProtKB-UniRule"/>
</dbReference>
<dbReference type="GO" id="GO:0006231">
    <property type="term" value="P:dTMP biosynthetic process"/>
    <property type="evidence" value="ECO:0007669"/>
    <property type="project" value="UniProtKB-UniRule"/>
</dbReference>
<dbReference type="GO" id="GO:0006235">
    <property type="term" value="P:dTTP biosynthetic process"/>
    <property type="evidence" value="ECO:0007669"/>
    <property type="project" value="UniProtKB-UniRule"/>
</dbReference>
<dbReference type="GO" id="GO:0032259">
    <property type="term" value="P:methylation"/>
    <property type="evidence" value="ECO:0007669"/>
    <property type="project" value="UniProtKB-KW"/>
</dbReference>
<dbReference type="CDD" id="cd00351">
    <property type="entry name" value="TS_Pyrimidine_HMase"/>
    <property type="match status" value="1"/>
</dbReference>
<dbReference type="Gene3D" id="3.30.572.10">
    <property type="entry name" value="Thymidylate synthase/dCMP hydroxymethylase domain"/>
    <property type="match status" value="1"/>
</dbReference>
<dbReference type="HAMAP" id="MF_00008">
    <property type="entry name" value="Thymidy_synth_bact"/>
    <property type="match status" value="1"/>
</dbReference>
<dbReference type="InterPro" id="IPR045097">
    <property type="entry name" value="Thymidate_synth/dCMP_Mease"/>
</dbReference>
<dbReference type="InterPro" id="IPR023451">
    <property type="entry name" value="Thymidate_synth/dCMP_Mease_dom"/>
</dbReference>
<dbReference type="InterPro" id="IPR036926">
    <property type="entry name" value="Thymidate_synth/dCMP_Mease_sf"/>
</dbReference>
<dbReference type="InterPro" id="IPR000398">
    <property type="entry name" value="Thymidylate_synthase"/>
</dbReference>
<dbReference type="NCBIfam" id="NF002496">
    <property type="entry name" value="PRK01827.1-2"/>
    <property type="match status" value="1"/>
</dbReference>
<dbReference type="NCBIfam" id="NF002497">
    <property type="entry name" value="PRK01827.1-3"/>
    <property type="match status" value="1"/>
</dbReference>
<dbReference type="NCBIfam" id="TIGR03284">
    <property type="entry name" value="thym_sym"/>
    <property type="match status" value="1"/>
</dbReference>
<dbReference type="PANTHER" id="PTHR11548:SF9">
    <property type="entry name" value="THYMIDYLATE SYNTHASE"/>
    <property type="match status" value="1"/>
</dbReference>
<dbReference type="PANTHER" id="PTHR11548">
    <property type="entry name" value="THYMIDYLATE SYNTHASE 1"/>
    <property type="match status" value="1"/>
</dbReference>
<dbReference type="Pfam" id="PF00303">
    <property type="entry name" value="Thymidylat_synt"/>
    <property type="match status" value="1"/>
</dbReference>
<dbReference type="PRINTS" id="PR00108">
    <property type="entry name" value="THYMDSNTHASE"/>
</dbReference>
<dbReference type="SUPFAM" id="SSF55831">
    <property type="entry name" value="Thymidylate synthase/dCMP hydroxymethylase"/>
    <property type="match status" value="1"/>
</dbReference>
<protein>
    <recommendedName>
        <fullName evidence="1">Thymidylate synthase</fullName>
        <shortName evidence="1">TS</shortName>
        <shortName evidence="1">TSase</shortName>
        <ecNumber evidence="1">2.1.1.45</ecNumber>
    </recommendedName>
</protein>
<organism>
    <name type="scientific">Mesoplasma florum (strain ATCC 33453 / NBRC 100688 / NCTC 11704 / L1)</name>
    <name type="common">Acholeplasma florum</name>
    <dbReference type="NCBI Taxonomy" id="265311"/>
    <lineage>
        <taxon>Bacteria</taxon>
        <taxon>Bacillati</taxon>
        <taxon>Mycoplasmatota</taxon>
        <taxon>Mollicutes</taxon>
        <taxon>Entomoplasmatales</taxon>
        <taxon>Entomoplasmataceae</taxon>
        <taxon>Mesoplasma</taxon>
    </lineage>
</organism>
<accession>Q6F145</accession>
<gene>
    <name evidence="1" type="primary">thyA</name>
    <name type="ordered locus">Mfl419</name>
</gene>
<sequence length="288" mass="33889">MKQYLELVNEILKDGEKREDRTNTGTISKFGVQKRYDLREGFPLLTTKKVFYKAIFHEMLWFIKGDTNIKYLVENNVKIWNEWPYENFKKSSEFNNETLQEFVERLKNDNEFCNKWGDLGPVYGKQWRDFGGIDQFAKLINDIKKNPFSRRHIVSAWNPAEVDNMLLPPCHSFWQVYVSKDGWLDLQLYQRSGDVFLGVPFNIASYALLMELIAKECNLKARYFVHTIGDAHIYLNHLEQINEQLKRKPLPLCKIKINSEKSIFDIAFEDIEIEGYESHAKITGEVAV</sequence>
<name>TYSY_MESFL</name>
<evidence type="ECO:0000255" key="1">
    <source>
        <dbReference type="HAMAP-Rule" id="MF_00008"/>
    </source>
</evidence>